<feature type="chain" id="PRO_0000155414" description="KappaPI-actitoxin-Avd3d" evidence="3">
    <location>
        <begin position="1"/>
        <end position="59"/>
    </location>
</feature>
<feature type="domain" description="BPTI/Kunitz inhibitor" evidence="2">
    <location>
        <begin position="5"/>
        <end position="55"/>
    </location>
</feature>
<feature type="site" description="Reactive bond for trypsin" evidence="1">
    <location>
        <begin position="15"/>
        <end position="16"/>
    </location>
</feature>
<feature type="disulfide bond" evidence="2">
    <location>
        <begin position="5"/>
        <end position="55"/>
    </location>
</feature>
<feature type="disulfide bond" evidence="2">
    <location>
        <begin position="14"/>
        <end position="38"/>
    </location>
</feature>
<feature type="disulfide bond" evidence="2">
    <location>
        <begin position="30"/>
        <end position="51"/>
    </location>
</feature>
<evidence type="ECO:0000250" key="1">
    <source>
        <dbReference type="UniProtKB" id="P31713"/>
    </source>
</evidence>
<evidence type="ECO:0000255" key="2">
    <source>
        <dbReference type="PROSITE-ProRule" id="PRU00031"/>
    </source>
</evidence>
<evidence type="ECO:0000269" key="3">
    <source>
    </source>
</evidence>
<evidence type="ECO:0000303" key="4">
    <source>
    </source>
</evidence>
<evidence type="ECO:0000303" key="5">
    <source>
    </source>
</evidence>
<evidence type="ECO:0000305" key="6"/>
<evidence type="ECO:0000305" key="7">
    <source>
    </source>
</evidence>
<organism>
    <name type="scientific">Anemonia sulcata</name>
    <name type="common">Mediterranean snakelocks sea anemone</name>
    <dbReference type="NCBI Taxonomy" id="6108"/>
    <lineage>
        <taxon>Eukaryota</taxon>
        <taxon>Metazoa</taxon>
        <taxon>Cnidaria</taxon>
        <taxon>Anthozoa</taxon>
        <taxon>Hexacorallia</taxon>
        <taxon>Actiniaria</taxon>
        <taxon>Actiniidae</taxon>
        <taxon>Anemonia</taxon>
    </lineage>
</organism>
<protein>
    <recommendedName>
        <fullName evidence="4">KappaPI-actitoxin-Avd3d</fullName>
        <shortName evidence="4">KappaPI-AITX-Avd3d</shortName>
    </recommendedName>
    <alternativeName>
        <fullName evidence="5">Kalicludine-3</fullName>
        <shortName evidence="5">AsKC3</shortName>
    </alternativeName>
</protein>
<comment type="function">
    <text evidence="3">Dual-function toxin that inhibits both the serine protease trypsin (Kd&lt;30 nM) and voltage-gated potassium channels Kv1.2/KCNA2 (IC(50)=1300 nM).</text>
</comment>
<comment type="subcellular location">
    <subcellularLocation>
        <location evidence="7">Secreted</location>
    </subcellularLocation>
    <subcellularLocation>
        <location evidence="6">Nematocyst</location>
    </subcellularLocation>
</comment>
<comment type="similarity">
    <text evidence="6">Belongs to the venom Kunitz-type family. Sea anemone type 2 potassium channel toxin subfamily.</text>
</comment>
<comment type="caution">
    <text evidence="6">Opinions are divided on whether Anemonia viridis (Forsskal, 1775) and Anemonia sulcata (Pennant, 1777) are separate species.</text>
</comment>
<keyword id="KW-0903">Direct protein sequencing</keyword>
<keyword id="KW-1015">Disulfide bond</keyword>
<keyword id="KW-0872">Ion channel impairing toxin</keyword>
<keyword id="KW-0166">Nematocyst</keyword>
<keyword id="KW-0632">Potassium channel impairing toxin</keyword>
<keyword id="KW-0646">Protease inhibitor</keyword>
<keyword id="KW-0964">Secreted</keyword>
<keyword id="KW-0722">Serine protease inhibitor</keyword>
<keyword id="KW-0800">Toxin</keyword>
<keyword id="KW-1220">Voltage-gated potassium channel impairing toxin</keyword>
<name>VKT3_ANESU</name>
<reference key="1">
    <citation type="journal article" date="1995" name="J. Biol. Chem.">
        <title>Kalicludines and kaliseptine. Two different classes of sea anemone toxins for voltage sensitive K+ channels.</title>
        <authorList>
            <person name="Schweitz H."/>
            <person name="Bruhn T."/>
            <person name="Guillemare E."/>
            <person name="Moinier D."/>
            <person name="Lancelin J.-M."/>
            <person name="Beress L."/>
            <person name="Lazdunski M."/>
        </authorList>
    </citation>
    <scope>PROTEIN SEQUENCE</scope>
    <scope>FUNCTION</scope>
</reference>
<reference key="2">
    <citation type="journal article" date="2012" name="Toxicon">
        <title>Development of a rational nomenclature for naming peptide and protein toxins from sea anemones.</title>
        <authorList>
            <person name="Oliveira J.S."/>
            <person name="Fuentes-Silva D."/>
            <person name="King G.F."/>
        </authorList>
    </citation>
    <scope>NOMENCLATURE</scope>
</reference>
<dbReference type="SMR" id="Q9TWF8"/>
<dbReference type="TCDB" id="8.B.13.1.1">
    <property type="family name" value="the kunitz-type serine protease inhibitor (hai) family"/>
</dbReference>
<dbReference type="GO" id="GO:0005576">
    <property type="term" value="C:extracellular region"/>
    <property type="evidence" value="ECO:0007669"/>
    <property type="project" value="UniProtKB-SubCell"/>
</dbReference>
<dbReference type="GO" id="GO:0042151">
    <property type="term" value="C:nematocyst"/>
    <property type="evidence" value="ECO:0007669"/>
    <property type="project" value="UniProtKB-SubCell"/>
</dbReference>
<dbReference type="GO" id="GO:0015459">
    <property type="term" value="F:potassium channel regulator activity"/>
    <property type="evidence" value="ECO:0007669"/>
    <property type="project" value="UniProtKB-KW"/>
</dbReference>
<dbReference type="GO" id="GO:0004867">
    <property type="term" value="F:serine-type endopeptidase inhibitor activity"/>
    <property type="evidence" value="ECO:0007669"/>
    <property type="project" value="UniProtKB-KW"/>
</dbReference>
<dbReference type="GO" id="GO:0090729">
    <property type="term" value="F:toxin activity"/>
    <property type="evidence" value="ECO:0007669"/>
    <property type="project" value="UniProtKB-KW"/>
</dbReference>
<dbReference type="CDD" id="cd22633">
    <property type="entry name" value="Kunitz_actitoxin-like"/>
    <property type="match status" value="1"/>
</dbReference>
<dbReference type="FunFam" id="4.10.410.10:FF:000021">
    <property type="entry name" value="Serine protease inhibitor, putative"/>
    <property type="match status" value="1"/>
</dbReference>
<dbReference type="Gene3D" id="4.10.410.10">
    <property type="entry name" value="Pancreatic trypsin inhibitor Kunitz domain"/>
    <property type="match status" value="1"/>
</dbReference>
<dbReference type="InterPro" id="IPR002223">
    <property type="entry name" value="Kunitz_BPTI"/>
</dbReference>
<dbReference type="InterPro" id="IPR036880">
    <property type="entry name" value="Kunitz_BPTI_sf"/>
</dbReference>
<dbReference type="InterPro" id="IPR020901">
    <property type="entry name" value="Prtase_inh_Kunz-CS"/>
</dbReference>
<dbReference type="InterPro" id="IPR050098">
    <property type="entry name" value="TFPI/VKTCI-like"/>
</dbReference>
<dbReference type="PANTHER" id="PTHR10083:SF374">
    <property type="entry name" value="BPTI_KUNITZ INHIBITOR DOMAIN-CONTAINING PROTEIN"/>
    <property type="match status" value="1"/>
</dbReference>
<dbReference type="PANTHER" id="PTHR10083">
    <property type="entry name" value="KUNITZ-TYPE PROTEASE INHIBITOR-RELATED"/>
    <property type="match status" value="1"/>
</dbReference>
<dbReference type="Pfam" id="PF00014">
    <property type="entry name" value="Kunitz_BPTI"/>
    <property type="match status" value="1"/>
</dbReference>
<dbReference type="PRINTS" id="PR00759">
    <property type="entry name" value="BASICPTASE"/>
</dbReference>
<dbReference type="SMART" id="SM00131">
    <property type="entry name" value="KU"/>
    <property type="match status" value="1"/>
</dbReference>
<dbReference type="SUPFAM" id="SSF57362">
    <property type="entry name" value="BPTI-like"/>
    <property type="match status" value="1"/>
</dbReference>
<dbReference type="PROSITE" id="PS00280">
    <property type="entry name" value="BPTI_KUNITZ_1"/>
    <property type="match status" value="1"/>
</dbReference>
<dbReference type="PROSITE" id="PS50279">
    <property type="entry name" value="BPTI_KUNITZ_2"/>
    <property type="match status" value="1"/>
</dbReference>
<proteinExistence type="evidence at protein level"/>
<accession>Q9TWF8</accession>
<sequence length="59" mass="6738">INGDCELPKVVGRCRARFPRYYYNLSSRRCEKFIYGGCGGNANNFHTLEECEKVCGVRS</sequence>